<organism>
    <name type="scientific">Acidithiobacillus ferrooxidans (strain ATCC 53993 / BNL-5-31)</name>
    <name type="common">Leptospirillum ferrooxidans (ATCC 53993)</name>
    <dbReference type="NCBI Taxonomy" id="380394"/>
    <lineage>
        <taxon>Bacteria</taxon>
        <taxon>Pseudomonadati</taxon>
        <taxon>Pseudomonadota</taxon>
        <taxon>Acidithiobacillia</taxon>
        <taxon>Acidithiobacillales</taxon>
        <taxon>Acidithiobacillaceae</taxon>
        <taxon>Acidithiobacillus</taxon>
    </lineage>
</organism>
<proteinExistence type="inferred from homology"/>
<dbReference type="EMBL" id="CP001132">
    <property type="protein sequence ID" value="ACH84007.1"/>
    <property type="molecule type" value="Genomic_DNA"/>
</dbReference>
<dbReference type="RefSeq" id="WP_012536993.1">
    <property type="nucleotide sequence ID" value="NC_011206.1"/>
</dbReference>
<dbReference type="SMR" id="B5EKH2"/>
<dbReference type="GeneID" id="65281253"/>
<dbReference type="KEGG" id="afe:Lferr_1786"/>
<dbReference type="eggNOG" id="COG1952">
    <property type="taxonomic scope" value="Bacteria"/>
</dbReference>
<dbReference type="HOGENOM" id="CLU_111574_1_0_6"/>
<dbReference type="GO" id="GO:0005737">
    <property type="term" value="C:cytoplasm"/>
    <property type="evidence" value="ECO:0007669"/>
    <property type="project" value="UniProtKB-SubCell"/>
</dbReference>
<dbReference type="GO" id="GO:0051082">
    <property type="term" value="F:unfolded protein binding"/>
    <property type="evidence" value="ECO:0007669"/>
    <property type="project" value="InterPro"/>
</dbReference>
<dbReference type="GO" id="GO:0051262">
    <property type="term" value="P:protein tetramerization"/>
    <property type="evidence" value="ECO:0007669"/>
    <property type="project" value="InterPro"/>
</dbReference>
<dbReference type="GO" id="GO:0015031">
    <property type="term" value="P:protein transport"/>
    <property type="evidence" value="ECO:0007669"/>
    <property type="project" value="UniProtKB-KW"/>
</dbReference>
<dbReference type="Gene3D" id="3.10.420.10">
    <property type="entry name" value="SecB-like"/>
    <property type="match status" value="1"/>
</dbReference>
<dbReference type="HAMAP" id="MF_00821">
    <property type="entry name" value="SecB"/>
    <property type="match status" value="1"/>
</dbReference>
<dbReference type="InterPro" id="IPR003708">
    <property type="entry name" value="SecB"/>
</dbReference>
<dbReference type="InterPro" id="IPR035958">
    <property type="entry name" value="SecB-like_sf"/>
</dbReference>
<dbReference type="NCBIfam" id="NF004392">
    <property type="entry name" value="PRK05751.1-3"/>
    <property type="match status" value="1"/>
</dbReference>
<dbReference type="NCBIfam" id="TIGR00809">
    <property type="entry name" value="secB"/>
    <property type="match status" value="1"/>
</dbReference>
<dbReference type="PANTHER" id="PTHR36918">
    <property type="match status" value="1"/>
</dbReference>
<dbReference type="PANTHER" id="PTHR36918:SF1">
    <property type="entry name" value="PROTEIN-EXPORT PROTEIN SECB"/>
    <property type="match status" value="1"/>
</dbReference>
<dbReference type="Pfam" id="PF02556">
    <property type="entry name" value="SecB"/>
    <property type="match status" value="1"/>
</dbReference>
<dbReference type="PRINTS" id="PR01594">
    <property type="entry name" value="SECBCHAPRONE"/>
</dbReference>
<dbReference type="SUPFAM" id="SSF54611">
    <property type="entry name" value="SecB-like"/>
    <property type="match status" value="1"/>
</dbReference>
<name>SECB_ACIF5</name>
<gene>
    <name evidence="1" type="primary">secB</name>
    <name type="ordered locus">Lferr_1786</name>
</gene>
<feature type="chain" id="PRO_1000148693" description="Protein-export protein SecB">
    <location>
        <begin position="1"/>
        <end position="149"/>
    </location>
</feature>
<reference key="1">
    <citation type="submission" date="2008-08" db="EMBL/GenBank/DDBJ databases">
        <title>Complete sequence of Acidithiobacillus ferrooxidans ATCC 53993.</title>
        <authorList>
            <person name="Lucas S."/>
            <person name="Copeland A."/>
            <person name="Lapidus A."/>
            <person name="Glavina del Rio T."/>
            <person name="Dalin E."/>
            <person name="Tice H."/>
            <person name="Bruce D."/>
            <person name="Goodwin L."/>
            <person name="Pitluck S."/>
            <person name="Sims D."/>
            <person name="Brettin T."/>
            <person name="Detter J.C."/>
            <person name="Han C."/>
            <person name="Kuske C.R."/>
            <person name="Larimer F."/>
            <person name="Land M."/>
            <person name="Hauser L."/>
            <person name="Kyrpides N."/>
            <person name="Lykidis A."/>
            <person name="Borole A.P."/>
        </authorList>
    </citation>
    <scope>NUCLEOTIDE SEQUENCE [LARGE SCALE GENOMIC DNA]</scope>
    <source>
        <strain>ATCC 53993 / BNL-5-31</strain>
    </source>
</reference>
<comment type="function">
    <text evidence="1">One of the proteins required for the normal export of preproteins out of the cell cytoplasm. It is a molecular chaperone that binds to a subset of precursor proteins, maintaining them in a translocation-competent state. It also specifically binds to its receptor SecA.</text>
</comment>
<comment type="subunit">
    <text evidence="1">Homotetramer, a dimer of dimers. One homotetramer interacts with 1 SecA dimer.</text>
</comment>
<comment type="subcellular location">
    <subcellularLocation>
        <location evidence="1">Cytoplasm</location>
    </subcellularLocation>
</comment>
<comment type="similarity">
    <text evidence="1">Belongs to the SecB family.</text>
</comment>
<protein>
    <recommendedName>
        <fullName evidence="1">Protein-export protein SecB</fullName>
    </recommendedName>
</protein>
<accession>B5EKH2</accession>
<keyword id="KW-0143">Chaperone</keyword>
<keyword id="KW-0963">Cytoplasm</keyword>
<keyword id="KW-0653">Protein transport</keyword>
<keyword id="KW-0811">Translocation</keyword>
<keyword id="KW-0813">Transport</keyword>
<sequence length="149" mass="16501">MDEQEAVFMIERIYVKDISFESPNAPLSFVQTEAPTVDVGLNTASTVVEGMEGLTEVTLTVTVKAKAGESTYFAVEVQQSGLFRVQNIPEEHMPALLAVHCPTILFPYAREVVADLVGRGGFQPLHLHPVNFEALYQQAQTQQQNYTTQ</sequence>
<evidence type="ECO:0000255" key="1">
    <source>
        <dbReference type="HAMAP-Rule" id="MF_00821"/>
    </source>
</evidence>